<protein>
    <recommendedName>
        <fullName evidence="1">Chaperone protein DnaK</fullName>
    </recommendedName>
    <alternativeName>
        <fullName evidence="1">HSP70</fullName>
    </alternativeName>
    <alternativeName>
        <fullName evidence="1">Heat shock 70 kDa protein</fullName>
    </alternativeName>
    <alternativeName>
        <fullName evidence="1">Heat shock protein 70</fullName>
    </alternativeName>
</protein>
<accession>B8F7S6</accession>
<gene>
    <name evidence="1" type="primary">dnaK</name>
    <name type="ordered locus">HAPS_1889</name>
</gene>
<proteinExistence type="inferred from homology"/>
<evidence type="ECO:0000255" key="1">
    <source>
        <dbReference type="HAMAP-Rule" id="MF_00332"/>
    </source>
</evidence>
<evidence type="ECO:0000256" key="2">
    <source>
        <dbReference type="SAM" id="MobiDB-lite"/>
    </source>
</evidence>
<reference key="1">
    <citation type="journal article" date="2009" name="J. Bacteriol.">
        <title>Complete genome sequence of Haemophilus parasuis SH0165.</title>
        <authorList>
            <person name="Yue M."/>
            <person name="Yang F."/>
            <person name="Yang J."/>
            <person name="Bei W."/>
            <person name="Cai X."/>
            <person name="Chen L."/>
            <person name="Dong J."/>
            <person name="Zhou R."/>
            <person name="Jin M."/>
            <person name="Jin Q."/>
            <person name="Chen H."/>
        </authorList>
    </citation>
    <scope>NUCLEOTIDE SEQUENCE [LARGE SCALE GENOMIC DNA]</scope>
    <source>
        <strain>SH0165</strain>
    </source>
</reference>
<feature type="chain" id="PRO_1000133146" description="Chaperone protein DnaK">
    <location>
        <begin position="1"/>
        <end position="633"/>
    </location>
</feature>
<feature type="region of interest" description="Disordered" evidence="2">
    <location>
        <begin position="600"/>
        <end position="633"/>
    </location>
</feature>
<feature type="compositionally biased region" description="Low complexity" evidence="2">
    <location>
        <begin position="600"/>
        <end position="614"/>
    </location>
</feature>
<feature type="modified residue" description="Phosphothreonine; by autocatalysis" evidence="1">
    <location>
        <position position="198"/>
    </location>
</feature>
<name>DNAK_GLAP5</name>
<keyword id="KW-0067">ATP-binding</keyword>
<keyword id="KW-0143">Chaperone</keyword>
<keyword id="KW-0547">Nucleotide-binding</keyword>
<keyword id="KW-0597">Phosphoprotein</keyword>
<keyword id="KW-1185">Reference proteome</keyword>
<keyword id="KW-0346">Stress response</keyword>
<dbReference type="EMBL" id="CP001321">
    <property type="protein sequence ID" value="ACL33378.1"/>
    <property type="molecule type" value="Genomic_DNA"/>
</dbReference>
<dbReference type="RefSeq" id="WP_010787164.1">
    <property type="nucleotide sequence ID" value="NC_011852.1"/>
</dbReference>
<dbReference type="SMR" id="B8F7S6"/>
<dbReference type="STRING" id="557723.HAPS_1889"/>
<dbReference type="KEGG" id="hap:HAPS_1889"/>
<dbReference type="PATRIC" id="fig|557723.8.peg.1873"/>
<dbReference type="HOGENOM" id="CLU_005965_2_1_6"/>
<dbReference type="Proteomes" id="UP000006743">
    <property type="component" value="Chromosome"/>
</dbReference>
<dbReference type="GO" id="GO:0005524">
    <property type="term" value="F:ATP binding"/>
    <property type="evidence" value="ECO:0007669"/>
    <property type="project" value="UniProtKB-UniRule"/>
</dbReference>
<dbReference type="GO" id="GO:0140662">
    <property type="term" value="F:ATP-dependent protein folding chaperone"/>
    <property type="evidence" value="ECO:0007669"/>
    <property type="project" value="InterPro"/>
</dbReference>
<dbReference type="GO" id="GO:0051082">
    <property type="term" value="F:unfolded protein binding"/>
    <property type="evidence" value="ECO:0007669"/>
    <property type="project" value="InterPro"/>
</dbReference>
<dbReference type="CDD" id="cd10234">
    <property type="entry name" value="ASKHA_NBD_HSP70_DnaK-like"/>
    <property type="match status" value="1"/>
</dbReference>
<dbReference type="FunFam" id="2.60.34.10:FF:000014">
    <property type="entry name" value="Chaperone protein DnaK HSP70"/>
    <property type="match status" value="1"/>
</dbReference>
<dbReference type="FunFam" id="3.30.30.30:FF:000003">
    <property type="entry name" value="Heat shock protein 9"/>
    <property type="match status" value="1"/>
</dbReference>
<dbReference type="FunFam" id="1.20.1270.10:FF:000001">
    <property type="entry name" value="Molecular chaperone DnaK"/>
    <property type="match status" value="1"/>
</dbReference>
<dbReference type="FunFam" id="3.30.420.40:FF:000004">
    <property type="entry name" value="Molecular chaperone DnaK"/>
    <property type="match status" value="1"/>
</dbReference>
<dbReference type="FunFam" id="3.90.640.10:FF:000003">
    <property type="entry name" value="Molecular chaperone DnaK"/>
    <property type="match status" value="1"/>
</dbReference>
<dbReference type="Gene3D" id="1.20.1270.10">
    <property type="match status" value="1"/>
</dbReference>
<dbReference type="Gene3D" id="3.30.420.40">
    <property type="match status" value="2"/>
</dbReference>
<dbReference type="Gene3D" id="3.90.640.10">
    <property type="entry name" value="Actin, Chain A, domain 4"/>
    <property type="match status" value="1"/>
</dbReference>
<dbReference type="Gene3D" id="2.60.34.10">
    <property type="entry name" value="Substrate Binding Domain Of DNAk, Chain A, domain 1"/>
    <property type="match status" value="1"/>
</dbReference>
<dbReference type="HAMAP" id="MF_00332">
    <property type="entry name" value="DnaK"/>
    <property type="match status" value="1"/>
</dbReference>
<dbReference type="InterPro" id="IPR043129">
    <property type="entry name" value="ATPase_NBD"/>
</dbReference>
<dbReference type="InterPro" id="IPR012725">
    <property type="entry name" value="Chaperone_DnaK"/>
</dbReference>
<dbReference type="InterPro" id="IPR018181">
    <property type="entry name" value="Heat_shock_70_CS"/>
</dbReference>
<dbReference type="InterPro" id="IPR029048">
    <property type="entry name" value="HSP70_C_sf"/>
</dbReference>
<dbReference type="InterPro" id="IPR029047">
    <property type="entry name" value="HSP70_peptide-bd_sf"/>
</dbReference>
<dbReference type="InterPro" id="IPR013126">
    <property type="entry name" value="Hsp_70_fam"/>
</dbReference>
<dbReference type="NCBIfam" id="NF001413">
    <property type="entry name" value="PRK00290.1"/>
    <property type="match status" value="1"/>
</dbReference>
<dbReference type="NCBIfam" id="NF003520">
    <property type="entry name" value="PRK05183.1"/>
    <property type="match status" value="1"/>
</dbReference>
<dbReference type="NCBIfam" id="TIGR02350">
    <property type="entry name" value="prok_dnaK"/>
    <property type="match status" value="1"/>
</dbReference>
<dbReference type="PANTHER" id="PTHR19375">
    <property type="entry name" value="HEAT SHOCK PROTEIN 70KDA"/>
    <property type="match status" value="1"/>
</dbReference>
<dbReference type="Pfam" id="PF00012">
    <property type="entry name" value="HSP70"/>
    <property type="match status" value="1"/>
</dbReference>
<dbReference type="PRINTS" id="PR00301">
    <property type="entry name" value="HEATSHOCK70"/>
</dbReference>
<dbReference type="SUPFAM" id="SSF53067">
    <property type="entry name" value="Actin-like ATPase domain"/>
    <property type="match status" value="2"/>
</dbReference>
<dbReference type="SUPFAM" id="SSF100920">
    <property type="entry name" value="Heat shock protein 70kD (HSP70), peptide-binding domain"/>
    <property type="match status" value="1"/>
</dbReference>
<dbReference type="PROSITE" id="PS00297">
    <property type="entry name" value="HSP70_1"/>
    <property type="match status" value="1"/>
</dbReference>
<dbReference type="PROSITE" id="PS00329">
    <property type="entry name" value="HSP70_2"/>
    <property type="match status" value="1"/>
</dbReference>
<dbReference type="PROSITE" id="PS01036">
    <property type="entry name" value="HSP70_3"/>
    <property type="match status" value="1"/>
</dbReference>
<comment type="function">
    <text evidence="1">Acts as a chaperone.</text>
</comment>
<comment type="induction">
    <text evidence="1">By stress conditions e.g. heat shock.</text>
</comment>
<comment type="similarity">
    <text evidence="1">Belongs to the heat shock protein 70 family.</text>
</comment>
<organism>
    <name type="scientific">Glaesserella parasuis serovar 5 (strain SH0165)</name>
    <name type="common">Haemophilus parasuis</name>
    <dbReference type="NCBI Taxonomy" id="557723"/>
    <lineage>
        <taxon>Bacteria</taxon>
        <taxon>Pseudomonadati</taxon>
        <taxon>Pseudomonadota</taxon>
        <taxon>Gammaproteobacteria</taxon>
        <taxon>Pasteurellales</taxon>
        <taxon>Pasteurellaceae</taxon>
        <taxon>Glaesserella</taxon>
    </lineage>
</organism>
<sequence length="633" mass="68241">MGKIIGIDLGTTNSCVAVMDGDKPRVIENAEGARTTPSIIAYTDKETLVGQPAKRQAITNPKNTLFAIKRLIGRRFTDSEVQRDIEIMPFEITKADNGDAWVSVKGEKMAPPQISAEVLKKMKKTAEDFLGEPVTEAVITVPAYFSDAQRQATKDAGRIAGLEVKRIINEPTAAALAYGLDSKKENQIVAVYDLGGGTFDLSIIEIDNLDGEQTFEVRATNGDTHLGGEDFDNRLINYLVEEFQKEQGVDLRNDSMAMQRVKEAAEKAKIELSSAQSTEVNLPYITADATGPKHLVLTVTRAKLEALVEDLVNRSLEPVKVALADAGLSVSEINDVILVGGQTRMPLVQKKVADFFGKEPRKDVNPDEAVAIGAAVQGGVLAGDVTDVLLLDVTPLSLGIETMGGVMTTLIEKNTTIPTKKSQVFSTAEDNQSAVTIHVLQGERKRASDNKSLGQFNLEGINPAPRGMPQIEVTFDIDANGIINVSAKDKNTGKEQQIKIQASSGLSDAEIEQMVRDAEANAEADRKFEELVQTRNQADAIAHSTRKQIAEAGSNLADADKAKIEEAVAALEKAAKGEDKADIEAKIEALVKASEPLIQAGQAQAQQGQQQAQQSQKDDGVVDAEFEEVKDNK</sequence>